<name>TPST2_BOVIN</name>
<accession>Q3SYY2</accession>
<dbReference type="EC" id="2.8.2.20" evidence="2"/>
<dbReference type="EMBL" id="BC103334">
    <property type="protein sequence ID" value="AAI03335.1"/>
    <property type="molecule type" value="mRNA"/>
</dbReference>
<dbReference type="RefSeq" id="NP_001030506.1">
    <property type="nucleotide sequence ID" value="NM_001035429.2"/>
</dbReference>
<dbReference type="RefSeq" id="XP_059732108.1">
    <property type="nucleotide sequence ID" value="XM_059876125.1"/>
</dbReference>
<dbReference type="RefSeq" id="XP_059732110.1">
    <property type="nucleotide sequence ID" value="XM_059876127.1"/>
</dbReference>
<dbReference type="RefSeq" id="XP_059732111.1">
    <property type="nucleotide sequence ID" value="XM_059876128.1"/>
</dbReference>
<dbReference type="RefSeq" id="XP_059732112.1">
    <property type="nucleotide sequence ID" value="XM_059876129.1"/>
</dbReference>
<dbReference type="RefSeq" id="XP_059732113.1">
    <property type="nucleotide sequence ID" value="XM_059876130.1"/>
</dbReference>
<dbReference type="SMR" id="Q3SYY2"/>
<dbReference type="FunCoup" id="Q3SYY2">
    <property type="interactions" value="144"/>
</dbReference>
<dbReference type="STRING" id="9913.ENSBTAP00000064433"/>
<dbReference type="GlyCosmos" id="Q3SYY2">
    <property type="glycosylation" value="2 sites, No reported glycans"/>
</dbReference>
<dbReference type="GlyGen" id="Q3SYY2">
    <property type="glycosylation" value="2 sites"/>
</dbReference>
<dbReference type="PaxDb" id="9913-ENSBTAP00000013685"/>
<dbReference type="Ensembl" id="ENSBTAT00000013685.5">
    <property type="protein sequence ID" value="ENSBTAP00000013685.5"/>
    <property type="gene ID" value="ENSBTAG00000010368.6"/>
</dbReference>
<dbReference type="GeneID" id="540183"/>
<dbReference type="KEGG" id="bta:540183"/>
<dbReference type="CTD" id="8459"/>
<dbReference type="VEuPathDB" id="HostDB:ENSBTAG00000010368"/>
<dbReference type="VGNC" id="VGNC:36265">
    <property type="gene designation" value="TPST2"/>
</dbReference>
<dbReference type="eggNOG" id="KOG3988">
    <property type="taxonomic scope" value="Eukaryota"/>
</dbReference>
<dbReference type="GeneTree" id="ENSGT00390000006030"/>
<dbReference type="InParanoid" id="Q3SYY2"/>
<dbReference type="OMA" id="VMMDSNH"/>
<dbReference type="OrthoDB" id="545675at2759"/>
<dbReference type="Reactome" id="R-BTA-156584">
    <property type="pathway name" value="Cytosolic sulfonation of small molecules"/>
</dbReference>
<dbReference type="Reactome" id="R-BTA-163841">
    <property type="pathway name" value="Gamma carboxylation, hypusinylation, hydroxylation, and arylsulfatase activation"/>
</dbReference>
<dbReference type="Proteomes" id="UP000009136">
    <property type="component" value="Chromosome 17"/>
</dbReference>
<dbReference type="Bgee" id="ENSBTAG00000010368">
    <property type="expression patterns" value="Expressed in thyroid gland and 108 other cell types or tissues"/>
</dbReference>
<dbReference type="GO" id="GO:0005794">
    <property type="term" value="C:Golgi apparatus"/>
    <property type="evidence" value="ECO:0000318"/>
    <property type="project" value="GO_Central"/>
</dbReference>
<dbReference type="GO" id="GO:0000139">
    <property type="term" value="C:Golgi membrane"/>
    <property type="evidence" value="ECO:0007669"/>
    <property type="project" value="UniProtKB-SubCell"/>
</dbReference>
<dbReference type="GO" id="GO:0008476">
    <property type="term" value="F:protein-tyrosine sulfotransferase activity"/>
    <property type="evidence" value="ECO:0000250"/>
    <property type="project" value="UniProtKB"/>
</dbReference>
<dbReference type="GO" id="GO:0006478">
    <property type="term" value="P:peptidyl-tyrosine sulfation"/>
    <property type="evidence" value="ECO:0000250"/>
    <property type="project" value="UniProtKB"/>
</dbReference>
<dbReference type="FunFam" id="3.40.50.300:FF:000290">
    <property type="entry name" value="Protein-tyrosine sulfotransferase"/>
    <property type="match status" value="1"/>
</dbReference>
<dbReference type="Gene3D" id="3.40.50.300">
    <property type="entry name" value="P-loop containing nucleotide triphosphate hydrolases"/>
    <property type="match status" value="1"/>
</dbReference>
<dbReference type="InterPro" id="IPR027417">
    <property type="entry name" value="P-loop_NTPase"/>
</dbReference>
<dbReference type="InterPro" id="IPR026634">
    <property type="entry name" value="TPST-like"/>
</dbReference>
<dbReference type="PANTHER" id="PTHR12788">
    <property type="entry name" value="PROTEIN-TYROSINE SULFOTRANSFERASE 2"/>
    <property type="match status" value="1"/>
</dbReference>
<dbReference type="PANTHER" id="PTHR12788:SF6">
    <property type="entry name" value="PROTEIN-TYROSINE SULFOTRANSFERASE 2"/>
    <property type="match status" value="1"/>
</dbReference>
<dbReference type="Pfam" id="PF13469">
    <property type="entry name" value="Sulfotransfer_3"/>
    <property type="match status" value="1"/>
</dbReference>
<dbReference type="SUPFAM" id="SSF52540">
    <property type="entry name" value="P-loop containing nucleoside triphosphate hydrolases"/>
    <property type="match status" value="1"/>
</dbReference>
<keyword id="KW-1015">Disulfide bond</keyword>
<keyword id="KW-0325">Glycoprotein</keyword>
<keyword id="KW-0333">Golgi apparatus</keyword>
<keyword id="KW-0472">Membrane</keyword>
<keyword id="KW-1185">Reference proteome</keyword>
<keyword id="KW-0735">Signal-anchor</keyword>
<keyword id="KW-0808">Transferase</keyword>
<keyword id="KW-0812">Transmembrane</keyword>
<keyword id="KW-1133">Transmembrane helix</keyword>
<organism>
    <name type="scientific">Bos taurus</name>
    <name type="common">Bovine</name>
    <dbReference type="NCBI Taxonomy" id="9913"/>
    <lineage>
        <taxon>Eukaryota</taxon>
        <taxon>Metazoa</taxon>
        <taxon>Chordata</taxon>
        <taxon>Craniata</taxon>
        <taxon>Vertebrata</taxon>
        <taxon>Euteleostomi</taxon>
        <taxon>Mammalia</taxon>
        <taxon>Eutheria</taxon>
        <taxon>Laurasiatheria</taxon>
        <taxon>Artiodactyla</taxon>
        <taxon>Ruminantia</taxon>
        <taxon>Pecora</taxon>
        <taxon>Bovidae</taxon>
        <taxon>Bovinae</taxon>
        <taxon>Bos</taxon>
    </lineage>
</organism>
<gene>
    <name type="primary">TPST2</name>
</gene>
<feature type="chain" id="PRO_0000253723" description="Protein-tyrosine sulfotransferase 2">
    <location>
        <begin position="1"/>
        <end position="377"/>
    </location>
</feature>
<feature type="topological domain" description="Cytoplasmic" evidence="3">
    <location>
        <begin position="1"/>
        <end position="8"/>
    </location>
</feature>
<feature type="transmembrane region" description="Helical; Signal-anchor for type II membrane protein" evidence="3">
    <location>
        <begin position="9"/>
        <end position="25"/>
    </location>
</feature>
<feature type="topological domain" description="Lumenal" evidence="3">
    <location>
        <begin position="26"/>
        <end position="377"/>
    </location>
</feature>
<feature type="region of interest" description="Interaction with peptide substrate" evidence="2">
    <location>
        <begin position="101"/>
        <end position="105"/>
    </location>
</feature>
<feature type="active site" description="Proton donor/acceptor" evidence="2">
    <location>
        <position position="99"/>
    </location>
</feature>
<feature type="binding site" evidence="2">
    <location>
        <begin position="78"/>
        <end position="82"/>
    </location>
    <ligand>
        <name>3'-phosphoadenylyl sulfate</name>
        <dbReference type="ChEBI" id="CHEBI:58339"/>
    </ligand>
</feature>
<feature type="binding site" evidence="2">
    <location>
        <position position="183"/>
    </location>
    <ligand>
        <name>3'-phosphoadenylyl sulfate</name>
        <dbReference type="ChEBI" id="CHEBI:58339"/>
    </ligand>
</feature>
<feature type="binding site" evidence="2">
    <location>
        <position position="191"/>
    </location>
    <ligand>
        <name>3'-phosphoadenylyl sulfate</name>
        <dbReference type="ChEBI" id="CHEBI:58339"/>
    </ligand>
</feature>
<feature type="binding site" evidence="2">
    <location>
        <position position="195"/>
    </location>
    <ligand>
        <name>3'-phosphoadenylyl sulfate</name>
        <dbReference type="ChEBI" id="CHEBI:58339"/>
    </ligand>
</feature>
<feature type="binding site" evidence="2">
    <location>
        <position position="238"/>
    </location>
    <ligand>
        <name>3'-phosphoadenylyl sulfate</name>
        <dbReference type="ChEBI" id="CHEBI:58339"/>
    </ligand>
</feature>
<feature type="binding site" evidence="2">
    <location>
        <begin position="285"/>
        <end position="294"/>
    </location>
    <ligand>
        <name>3'-phosphoadenylyl sulfate</name>
        <dbReference type="ChEBI" id="CHEBI:58339"/>
    </ligand>
</feature>
<feature type="binding site" evidence="2">
    <location>
        <position position="300"/>
    </location>
    <ligand>
        <name>3'-phosphoadenylyl sulfate</name>
        <dbReference type="ChEBI" id="CHEBI:58339"/>
    </ligand>
</feature>
<feature type="site" description="Transition state stabilizer" evidence="2">
    <location>
        <position position="158"/>
    </location>
</feature>
<feature type="site" description="Transition state stabilizer" evidence="2">
    <location>
        <position position="285"/>
    </location>
</feature>
<feature type="glycosylation site" description="N-linked (GlcNAc...) asparagine" evidence="3">
    <location>
        <position position="343"/>
    </location>
</feature>
<feature type="glycosylation site" description="N-linked (GlcNAc...) asparagine" evidence="3">
    <location>
        <position position="368"/>
    </location>
</feature>
<feature type="disulfide bond" evidence="2">
    <location>
        <begin position="96"/>
        <end position="156"/>
    </location>
</feature>
<feature type="disulfide bond" evidence="2">
    <location>
        <begin position="225"/>
        <end position="233"/>
    </location>
</feature>
<protein>
    <recommendedName>
        <fullName>Protein-tyrosine sulfotransferase 2</fullName>
        <ecNumber evidence="2">2.8.2.20</ecNumber>
    </recommendedName>
    <alternativeName>
        <fullName>Tyrosylprotein sulfotransferase 2</fullName>
        <shortName>TPST-2</shortName>
    </alternativeName>
</protein>
<evidence type="ECO:0000250" key="1"/>
<evidence type="ECO:0000250" key="2">
    <source>
        <dbReference type="UniProtKB" id="O60704"/>
    </source>
</evidence>
<evidence type="ECO:0000255" key="3"/>
<evidence type="ECO:0000305" key="4"/>
<comment type="function">
    <text evidence="2">Catalyzes the O-sulfation of tyrosine residues within acidic motifs of polypeptides, using 3'-phosphoadenylyl sulfate (PAPS) as cosubstrate.</text>
</comment>
<comment type="catalytic activity">
    <reaction evidence="2">
        <text>L-tyrosyl-[protein] + 3'-phosphoadenylyl sulfate = O-sulfo-L-tyrosine-[protein] + adenosine 3',5'-bisphosphate + H(+)</text>
        <dbReference type="Rhea" id="RHEA:16801"/>
        <dbReference type="Rhea" id="RHEA-COMP:10136"/>
        <dbReference type="Rhea" id="RHEA-COMP:11688"/>
        <dbReference type="ChEBI" id="CHEBI:15378"/>
        <dbReference type="ChEBI" id="CHEBI:46858"/>
        <dbReference type="ChEBI" id="CHEBI:58339"/>
        <dbReference type="ChEBI" id="CHEBI:58343"/>
        <dbReference type="ChEBI" id="CHEBI:65286"/>
        <dbReference type="EC" id="2.8.2.20"/>
    </reaction>
</comment>
<comment type="subunit">
    <text evidence="2">Homodimer. Can also form heterodimers with TPST1.</text>
</comment>
<comment type="subcellular location">
    <subcellularLocation>
        <location evidence="2">Golgi apparatus membrane</location>
        <topology evidence="2">Single-pass type II membrane protein</topology>
    </subcellularLocation>
</comment>
<comment type="PTM">
    <text evidence="2">N-glycosylated.</text>
</comment>
<comment type="miscellaneous">
    <text evidence="1">Substrate peptides must be flexible in order to adopt an L-shaped conformation in the deep binding cleft.</text>
</comment>
<comment type="similarity">
    <text evidence="4">Belongs to the protein sulfotransferase family.</text>
</comment>
<reference key="1">
    <citation type="submission" date="2005-08" db="EMBL/GenBank/DDBJ databases">
        <authorList>
            <consortium name="NIH - Mammalian Gene Collection (MGC) project"/>
        </authorList>
    </citation>
    <scope>NUCLEOTIDE SEQUENCE [LARGE SCALE MRNA]</scope>
    <source>
        <strain>Crossbred X Angus</strain>
        <tissue>Ileum</tissue>
    </source>
</reference>
<proteinExistence type="evidence at transcript level"/>
<sequence>MRLSMRRALLAAGLALALVLAVHLGQRVLECQAVLGGPRGPRRTMRPEQEDLMMVGADHVEYRYGKAMPLIFVGGVPRSGTTLMRAMLDAHPEVRCGEETRIIPRVLAMRQAWSKSGREKLRLDEAGVTDEVLDAAMQAFILEVIAKHGEPARVLCNKDPFTLKSSVYLSRLFPNSKFLLMVRDGRASVHSMITRKVTIAGFDLSSYRDCLTKWNKAIEVMYAQCMEVGRDKCLPVYYEQLVLHPRRSLKVILDFLGIAWSDAVLHHEDLIGKPGGVSLSKIERSTDQVIKPVNLEALSKWTGHIPGDVLRDMAQIAPMLARLGYDPYANPPNYGNPDPIVINNTHRVLKGDYKTPANLKGYFQVNLNSTSSHLGSS</sequence>